<accession>O93222</accession>
<sequence length="73" mass="7855">MAFLKKSLFLVLFLAIVPLSICEEEKREEENEEKQEDDDQSEKRGLVSGLLNTAGGLLGDLLGSLGSLSGGES</sequence>
<feature type="signal peptide" evidence="2">
    <location>
        <begin position="1"/>
        <end position="22"/>
    </location>
</feature>
<feature type="propeptide" id="PRO_0000007062" evidence="6">
    <location>
        <begin position="23"/>
        <end position="42"/>
    </location>
</feature>
<feature type="peptide" id="PRO_0000007063" description="Plasticin-A1" evidence="6">
    <location>
        <begin position="45"/>
        <end position="70"/>
    </location>
</feature>
<feature type="propeptide" id="PRO_0000007064" evidence="6">
    <location>
        <begin position="72"/>
        <end position="73"/>
    </location>
</feature>
<feature type="region of interest" description="Disordered" evidence="3">
    <location>
        <begin position="25"/>
        <end position="45"/>
    </location>
</feature>
<feature type="compositionally biased region" description="Acidic residues" evidence="3">
    <location>
        <begin position="30"/>
        <end position="40"/>
    </location>
</feature>
<feature type="modified residue" description="Glycine amide" evidence="6">
    <location>
        <position position="70"/>
    </location>
</feature>
<evidence type="ECO:0000250" key="1">
    <source>
        <dbReference type="UniProtKB" id="O93454"/>
    </source>
</evidence>
<evidence type="ECO:0000255" key="2"/>
<evidence type="ECO:0000256" key="3">
    <source>
        <dbReference type="SAM" id="MobiDB-lite"/>
    </source>
</evidence>
<evidence type="ECO:0000303" key="4">
    <source>
    </source>
</evidence>
<evidence type="ECO:0000303" key="5">
    <source>
    </source>
</evidence>
<evidence type="ECO:0000305" key="6"/>
<evidence type="ECO:0000305" key="7">
    <source>
    </source>
</evidence>
<name>PTC1_AGAAN</name>
<keyword id="KW-0027">Amidation</keyword>
<keyword id="KW-0878">Amphibian defense peptide</keyword>
<keyword id="KW-0165">Cleavage on pair of basic residues</keyword>
<keyword id="KW-0204">Cytolysis</keyword>
<keyword id="KW-0354">Hemolysis</keyword>
<keyword id="KW-0472">Membrane</keyword>
<keyword id="KW-0964">Secreted</keyword>
<keyword id="KW-0732">Signal</keyword>
<keyword id="KW-1052">Target cell membrane</keyword>
<keyword id="KW-1053">Target membrane</keyword>
<protein>
    <recommendedName>
        <fullName evidence="4">Plasticin-A1</fullName>
        <shortName evidence="4">PTC-A1</shortName>
    </recommendedName>
    <alternativeName>
        <fullName evidence="5">Dermaseptin AA-2-5</fullName>
    </alternativeName>
</protein>
<dbReference type="EMBL" id="AJ005184">
    <property type="protein sequence ID" value="CAA06421.1"/>
    <property type="molecule type" value="mRNA"/>
</dbReference>
<dbReference type="GO" id="GO:0005576">
    <property type="term" value="C:extracellular region"/>
    <property type="evidence" value="ECO:0007669"/>
    <property type="project" value="UniProtKB-SubCell"/>
</dbReference>
<dbReference type="GO" id="GO:0016020">
    <property type="term" value="C:membrane"/>
    <property type="evidence" value="ECO:0007669"/>
    <property type="project" value="UniProtKB-KW"/>
</dbReference>
<dbReference type="GO" id="GO:0044218">
    <property type="term" value="C:other organism cell membrane"/>
    <property type="evidence" value="ECO:0007669"/>
    <property type="project" value="UniProtKB-KW"/>
</dbReference>
<dbReference type="GO" id="GO:0006952">
    <property type="term" value="P:defense response"/>
    <property type="evidence" value="ECO:0007669"/>
    <property type="project" value="UniProtKB-KW"/>
</dbReference>
<dbReference type="GO" id="GO:0031640">
    <property type="term" value="P:killing of cells of another organism"/>
    <property type="evidence" value="ECO:0007669"/>
    <property type="project" value="UniProtKB-KW"/>
</dbReference>
<dbReference type="InterPro" id="IPR004275">
    <property type="entry name" value="Frog_antimicrobial_propeptide"/>
</dbReference>
<dbReference type="InterPro" id="IPR016322">
    <property type="entry name" value="FSAP"/>
</dbReference>
<dbReference type="Pfam" id="PF03032">
    <property type="entry name" value="FSAP_sig_propep"/>
    <property type="match status" value="1"/>
</dbReference>
<dbReference type="PIRSF" id="PIRSF001822">
    <property type="entry name" value="Dermaseptin_precursor"/>
    <property type="match status" value="1"/>
</dbReference>
<reference key="1">
    <citation type="journal article" date="1998" name="Biochim. Biophys. Acta">
        <title>Cloning of cDNAs encoding new peptides of the dermaseptin-family.</title>
        <authorList>
            <person name="Wechselberger C."/>
        </authorList>
    </citation>
    <scope>NUCLEOTIDE SEQUENCE [MRNA]</scope>
    <source>
        <tissue>Skin</tissue>
    </source>
</reference>
<reference key="2">
    <citation type="journal article" date="2008" name="Peptides">
        <title>A consistent nomenclature of antimicrobial peptides isolated from frogs of the subfamily Phyllomedusinae.</title>
        <authorList>
            <person name="Amiche M."/>
            <person name="Ladram A."/>
            <person name="Nicolas P."/>
        </authorList>
    </citation>
    <scope>NOMENCLATURE</scope>
</reference>
<organism>
    <name type="scientific">Agalychnis annae</name>
    <name type="common">Blue-sided leaf frog</name>
    <name type="synonym">Phyllomedusa annae</name>
    <dbReference type="NCBI Taxonomy" id="75990"/>
    <lineage>
        <taxon>Eukaryota</taxon>
        <taxon>Metazoa</taxon>
        <taxon>Chordata</taxon>
        <taxon>Craniata</taxon>
        <taxon>Vertebrata</taxon>
        <taxon>Euteleostomi</taxon>
        <taxon>Amphibia</taxon>
        <taxon>Batrachia</taxon>
        <taxon>Anura</taxon>
        <taxon>Neobatrachia</taxon>
        <taxon>Hyloidea</taxon>
        <taxon>Hylidae</taxon>
        <taxon>Phyllomedusinae</taxon>
        <taxon>Agalychnis</taxon>
    </lineage>
</organism>
<comment type="function">
    <text evidence="1">Peptide with no antimicrobial activity. May act in synergy with cationic peptides by enhancing their activity. Has a moderate hemolytic activity.</text>
</comment>
<comment type="subcellular location">
    <subcellularLocation>
        <location evidence="7">Secreted</location>
    </subcellularLocation>
    <subcellularLocation>
        <location evidence="6">Target cell membrane</location>
    </subcellularLocation>
</comment>
<comment type="tissue specificity">
    <text evidence="7">Expressed by the skin glands.</text>
</comment>
<comment type="domain">
    <text evidence="6">Plasticins have huge conformational plasticity. They can display random coil, alpha-helical, beta-sheet or beta-harpin structures.</text>
</comment>
<comment type="similarity">
    <text evidence="6">Belongs to the frog skin active peptide (FSAP) family. Plasticin subfamily.</text>
</comment>
<comment type="online information" name="The antimicrobial peptide database">
    <link uri="https://wangapd3.com/database/query_output.php?ID=1383"/>
</comment>
<proteinExistence type="inferred from homology"/>